<name>LSPA_ECO24</name>
<evidence type="ECO:0000255" key="1">
    <source>
        <dbReference type="HAMAP-Rule" id="MF_00161"/>
    </source>
</evidence>
<gene>
    <name evidence="1" type="primary">lspA</name>
    <name type="ordered locus">EcE24377A_0027</name>
</gene>
<keyword id="KW-0064">Aspartyl protease</keyword>
<keyword id="KW-0997">Cell inner membrane</keyword>
<keyword id="KW-1003">Cell membrane</keyword>
<keyword id="KW-0378">Hydrolase</keyword>
<keyword id="KW-0472">Membrane</keyword>
<keyword id="KW-0645">Protease</keyword>
<keyword id="KW-1185">Reference proteome</keyword>
<keyword id="KW-0812">Transmembrane</keyword>
<keyword id="KW-1133">Transmembrane helix</keyword>
<protein>
    <recommendedName>
        <fullName evidence="1">Lipoprotein signal peptidase</fullName>
        <ecNumber evidence="1">3.4.23.36</ecNumber>
    </recommendedName>
    <alternativeName>
        <fullName evidence="1">Prolipoprotein signal peptidase</fullName>
    </alternativeName>
    <alternativeName>
        <fullName evidence="1">Signal peptidase II</fullName>
        <shortName evidence="1">SPase II</shortName>
    </alternativeName>
</protein>
<reference key="1">
    <citation type="journal article" date="2008" name="J. Bacteriol.">
        <title>The pangenome structure of Escherichia coli: comparative genomic analysis of E. coli commensal and pathogenic isolates.</title>
        <authorList>
            <person name="Rasko D.A."/>
            <person name="Rosovitz M.J."/>
            <person name="Myers G.S.A."/>
            <person name="Mongodin E.F."/>
            <person name="Fricke W.F."/>
            <person name="Gajer P."/>
            <person name="Crabtree J."/>
            <person name="Sebaihia M."/>
            <person name="Thomson N.R."/>
            <person name="Chaudhuri R."/>
            <person name="Henderson I.R."/>
            <person name="Sperandio V."/>
            <person name="Ravel J."/>
        </authorList>
    </citation>
    <scope>NUCLEOTIDE SEQUENCE [LARGE SCALE GENOMIC DNA]</scope>
    <source>
        <strain>E24377A / ETEC</strain>
    </source>
</reference>
<dbReference type="EC" id="3.4.23.36" evidence="1"/>
<dbReference type="EMBL" id="CP000800">
    <property type="protein sequence ID" value="ABV17261.1"/>
    <property type="molecule type" value="Genomic_DNA"/>
</dbReference>
<dbReference type="RefSeq" id="WP_000083369.1">
    <property type="nucleotide sequence ID" value="NC_009801.1"/>
</dbReference>
<dbReference type="SMR" id="A7ZHB6"/>
<dbReference type="MEROPS" id="A08.001"/>
<dbReference type="GeneID" id="75169926"/>
<dbReference type="KEGG" id="ecw:EcE24377A_0027"/>
<dbReference type="HOGENOM" id="CLU_083252_4_0_6"/>
<dbReference type="UniPathway" id="UPA00665"/>
<dbReference type="Proteomes" id="UP000001122">
    <property type="component" value="Chromosome"/>
</dbReference>
<dbReference type="GO" id="GO:0005886">
    <property type="term" value="C:plasma membrane"/>
    <property type="evidence" value="ECO:0007669"/>
    <property type="project" value="UniProtKB-SubCell"/>
</dbReference>
<dbReference type="GO" id="GO:0004190">
    <property type="term" value="F:aspartic-type endopeptidase activity"/>
    <property type="evidence" value="ECO:0007669"/>
    <property type="project" value="UniProtKB-UniRule"/>
</dbReference>
<dbReference type="GO" id="GO:0006508">
    <property type="term" value="P:proteolysis"/>
    <property type="evidence" value="ECO:0007669"/>
    <property type="project" value="UniProtKB-KW"/>
</dbReference>
<dbReference type="HAMAP" id="MF_00161">
    <property type="entry name" value="LspA"/>
    <property type="match status" value="1"/>
</dbReference>
<dbReference type="InterPro" id="IPR001872">
    <property type="entry name" value="Peptidase_A8"/>
</dbReference>
<dbReference type="NCBIfam" id="TIGR00077">
    <property type="entry name" value="lspA"/>
    <property type="match status" value="1"/>
</dbReference>
<dbReference type="PANTHER" id="PTHR33695">
    <property type="entry name" value="LIPOPROTEIN SIGNAL PEPTIDASE"/>
    <property type="match status" value="1"/>
</dbReference>
<dbReference type="PANTHER" id="PTHR33695:SF1">
    <property type="entry name" value="LIPOPROTEIN SIGNAL PEPTIDASE"/>
    <property type="match status" value="1"/>
</dbReference>
<dbReference type="Pfam" id="PF01252">
    <property type="entry name" value="Peptidase_A8"/>
    <property type="match status" value="1"/>
</dbReference>
<dbReference type="PRINTS" id="PR00781">
    <property type="entry name" value="LIPOSIGPTASE"/>
</dbReference>
<dbReference type="PROSITE" id="PS00855">
    <property type="entry name" value="SPASE_II"/>
    <property type="match status" value="1"/>
</dbReference>
<organism>
    <name type="scientific">Escherichia coli O139:H28 (strain E24377A / ETEC)</name>
    <dbReference type="NCBI Taxonomy" id="331111"/>
    <lineage>
        <taxon>Bacteria</taxon>
        <taxon>Pseudomonadati</taxon>
        <taxon>Pseudomonadota</taxon>
        <taxon>Gammaproteobacteria</taxon>
        <taxon>Enterobacterales</taxon>
        <taxon>Enterobacteriaceae</taxon>
        <taxon>Escherichia</taxon>
    </lineage>
</organism>
<proteinExistence type="inferred from homology"/>
<accession>A7ZHB6</accession>
<sequence>MSQSICSTGLRWLWLVVVVLIIDLGSKYLILQNFALGDTVPLFPSLNLHYARNYGAAFSFLADSGGWQRWFFAGIAIGISVILAVMMYRSKATQKLNNIAYALIIGGALGNLFDRLWHGFVVDMIDFYVGDWHFATFNLADTAICVGAALIVLEGFLPSKAKKQ</sequence>
<comment type="function">
    <text evidence="1">This protein specifically catalyzes the removal of signal peptides from prolipoproteins.</text>
</comment>
<comment type="catalytic activity">
    <reaction evidence="1">
        <text>Release of signal peptides from bacterial membrane prolipoproteins. Hydrolyzes -Xaa-Yaa-Zaa-|-(S,diacylglyceryl)Cys-, in which Xaa is hydrophobic (preferably Leu), and Yaa (Ala or Ser) and Zaa (Gly or Ala) have small, neutral side chains.</text>
        <dbReference type="EC" id="3.4.23.36"/>
    </reaction>
</comment>
<comment type="pathway">
    <text evidence="1">Protein modification; lipoprotein biosynthesis (signal peptide cleavage).</text>
</comment>
<comment type="subcellular location">
    <subcellularLocation>
        <location evidence="1">Cell inner membrane</location>
        <topology evidence="1">Multi-pass membrane protein</topology>
    </subcellularLocation>
</comment>
<comment type="similarity">
    <text evidence="1">Belongs to the peptidase A8 family.</text>
</comment>
<feature type="chain" id="PRO_1000058234" description="Lipoprotein signal peptidase">
    <location>
        <begin position="1"/>
        <end position="164"/>
    </location>
</feature>
<feature type="transmembrane region" description="Helical" evidence="1">
    <location>
        <begin position="12"/>
        <end position="32"/>
    </location>
</feature>
<feature type="transmembrane region" description="Helical" evidence="1">
    <location>
        <begin position="70"/>
        <end position="90"/>
    </location>
</feature>
<feature type="transmembrane region" description="Helical" evidence="1">
    <location>
        <begin position="102"/>
        <end position="122"/>
    </location>
</feature>
<feature type="transmembrane region" description="Helical" evidence="1">
    <location>
        <begin position="137"/>
        <end position="157"/>
    </location>
</feature>
<feature type="active site" evidence="1">
    <location>
        <position position="123"/>
    </location>
</feature>
<feature type="active site" evidence="1">
    <location>
        <position position="141"/>
    </location>
</feature>